<name>GRPE_PARD8</name>
<evidence type="ECO:0000255" key="1">
    <source>
        <dbReference type="HAMAP-Rule" id="MF_01151"/>
    </source>
</evidence>
<evidence type="ECO:0000256" key="2">
    <source>
        <dbReference type="SAM" id="MobiDB-lite"/>
    </source>
</evidence>
<accession>A6LBD8</accession>
<proteinExistence type="inferred from homology"/>
<comment type="function">
    <text evidence="1">Participates actively in the response to hyperosmotic and heat shock by preventing the aggregation of stress-denatured proteins, in association with DnaK and GrpE. It is the nucleotide exchange factor for DnaK and may function as a thermosensor. Unfolded proteins bind initially to DnaJ; upon interaction with the DnaJ-bound protein, DnaK hydrolyzes its bound ATP, resulting in the formation of a stable complex. GrpE releases ADP from DnaK; ATP binding to DnaK triggers the release of the substrate protein, thus completing the reaction cycle. Several rounds of ATP-dependent interactions between DnaJ, DnaK and GrpE are required for fully efficient folding.</text>
</comment>
<comment type="subunit">
    <text evidence="1">Homodimer.</text>
</comment>
<comment type="subcellular location">
    <subcellularLocation>
        <location evidence="1">Cytoplasm</location>
    </subcellularLocation>
</comment>
<comment type="similarity">
    <text evidence="1">Belongs to the GrpE family.</text>
</comment>
<gene>
    <name evidence="1" type="primary">grpE</name>
    <name type="ordered locus">BDI_1241</name>
</gene>
<keyword id="KW-0143">Chaperone</keyword>
<keyword id="KW-0963">Cytoplasm</keyword>
<keyword id="KW-1185">Reference proteome</keyword>
<keyword id="KW-0346">Stress response</keyword>
<feature type="chain" id="PRO_1000164208" description="Protein GrpE">
    <location>
        <begin position="1"/>
        <end position="194"/>
    </location>
</feature>
<feature type="region of interest" description="Disordered" evidence="2">
    <location>
        <begin position="1"/>
        <end position="48"/>
    </location>
</feature>
<feature type="compositionally biased region" description="Basic and acidic residues" evidence="2">
    <location>
        <begin position="1"/>
        <end position="14"/>
    </location>
</feature>
<feature type="compositionally biased region" description="Polar residues" evidence="2">
    <location>
        <begin position="24"/>
        <end position="34"/>
    </location>
</feature>
<organism>
    <name type="scientific">Parabacteroides distasonis (strain ATCC 8503 / DSM 20701 / CIP 104284 / JCM 5825 / NCTC 11152)</name>
    <dbReference type="NCBI Taxonomy" id="435591"/>
    <lineage>
        <taxon>Bacteria</taxon>
        <taxon>Pseudomonadati</taxon>
        <taxon>Bacteroidota</taxon>
        <taxon>Bacteroidia</taxon>
        <taxon>Bacteroidales</taxon>
        <taxon>Tannerellaceae</taxon>
        <taxon>Parabacteroides</taxon>
    </lineage>
</organism>
<dbReference type="EMBL" id="CP000140">
    <property type="protein sequence ID" value="ABR43002.1"/>
    <property type="molecule type" value="Genomic_DNA"/>
</dbReference>
<dbReference type="RefSeq" id="WP_008772074.1">
    <property type="nucleotide sequence ID" value="NC_009615.1"/>
</dbReference>
<dbReference type="SMR" id="A6LBD8"/>
<dbReference type="STRING" id="435591.BDI_1241"/>
<dbReference type="PaxDb" id="435591-BDI_1241"/>
<dbReference type="KEGG" id="pdi:BDI_1241"/>
<dbReference type="eggNOG" id="COG0576">
    <property type="taxonomic scope" value="Bacteria"/>
</dbReference>
<dbReference type="HOGENOM" id="CLU_057217_5_2_10"/>
<dbReference type="BioCyc" id="PDIS435591:G1G5A-1276-MONOMER"/>
<dbReference type="Proteomes" id="UP000000566">
    <property type="component" value="Chromosome"/>
</dbReference>
<dbReference type="GO" id="GO:0005737">
    <property type="term" value="C:cytoplasm"/>
    <property type="evidence" value="ECO:0007669"/>
    <property type="project" value="UniProtKB-SubCell"/>
</dbReference>
<dbReference type="GO" id="GO:0000774">
    <property type="term" value="F:adenyl-nucleotide exchange factor activity"/>
    <property type="evidence" value="ECO:0007669"/>
    <property type="project" value="InterPro"/>
</dbReference>
<dbReference type="GO" id="GO:0042803">
    <property type="term" value="F:protein homodimerization activity"/>
    <property type="evidence" value="ECO:0007669"/>
    <property type="project" value="InterPro"/>
</dbReference>
<dbReference type="GO" id="GO:0051087">
    <property type="term" value="F:protein-folding chaperone binding"/>
    <property type="evidence" value="ECO:0007669"/>
    <property type="project" value="InterPro"/>
</dbReference>
<dbReference type="GO" id="GO:0051082">
    <property type="term" value="F:unfolded protein binding"/>
    <property type="evidence" value="ECO:0007669"/>
    <property type="project" value="TreeGrafter"/>
</dbReference>
<dbReference type="GO" id="GO:0006457">
    <property type="term" value="P:protein folding"/>
    <property type="evidence" value="ECO:0007669"/>
    <property type="project" value="InterPro"/>
</dbReference>
<dbReference type="CDD" id="cd00446">
    <property type="entry name" value="GrpE"/>
    <property type="match status" value="1"/>
</dbReference>
<dbReference type="Gene3D" id="3.90.20.20">
    <property type="match status" value="1"/>
</dbReference>
<dbReference type="Gene3D" id="2.30.22.10">
    <property type="entry name" value="Head domain of nucleotide exchange factor GrpE"/>
    <property type="match status" value="1"/>
</dbReference>
<dbReference type="HAMAP" id="MF_01151">
    <property type="entry name" value="GrpE"/>
    <property type="match status" value="1"/>
</dbReference>
<dbReference type="InterPro" id="IPR000740">
    <property type="entry name" value="GrpE"/>
</dbReference>
<dbReference type="InterPro" id="IPR013805">
    <property type="entry name" value="GrpE_coiled_coil"/>
</dbReference>
<dbReference type="InterPro" id="IPR009012">
    <property type="entry name" value="GrpE_head"/>
</dbReference>
<dbReference type="PANTHER" id="PTHR21237">
    <property type="entry name" value="GRPE PROTEIN"/>
    <property type="match status" value="1"/>
</dbReference>
<dbReference type="PANTHER" id="PTHR21237:SF23">
    <property type="entry name" value="GRPE PROTEIN HOMOLOG, MITOCHONDRIAL"/>
    <property type="match status" value="1"/>
</dbReference>
<dbReference type="Pfam" id="PF01025">
    <property type="entry name" value="GrpE"/>
    <property type="match status" value="1"/>
</dbReference>
<dbReference type="PRINTS" id="PR00773">
    <property type="entry name" value="GRPEPROTEIN"/>
</dbReference>
<dbReference type="SUPFAM" id="SSF58014">
    <property type="entry name" value="Coiled-coil domain of nucleotide exchange factor GrpE"/>
    <property type="match status" value="1"/>
</dbReference>
<dbReference type="SUPFAM" id="SSF51064">
    <property type="entry name" value="Head domain of nucleotide exchange factor GrpE"/>
    <property type="match status" value="1"/>
</dbReference>
<reference key="1">
    <citation type="journal article" date="2007" name="PLoS Biol.">
        <title>Evolution of symbiotic bacteria in the distal human intestine.</title>
        <authorList>
            <person name="Xu J."/>
            <person name="Mahowald M.A."/>
            <person name="Ley R.E."/>
            <person name="Lozupone C.A."/>
            <person name="Hamady M."/>
            <person name="Martens E.C."/>
            <person name="Henrissat B."/>
            <person name="Coutinho P.M."/>
            <person name="Minx P."/>
            <person name="Latreille P."/>
            <person name="Cordum H."/>
            <person name="Van Brunt A."/>
            <person name="Kim K."/>
            <person name="Fulton R.S."/>
            <person name="Fulton L.A."/>
            <person name="Clifton S.W."/>
            <person name="Wilson R.K."/>
            <person name="Knight R.D."/>
            <person name="Gordon J.I."/>
        </authorList>
    </citation>
    <scope>NUCLEOTIDE SEQUENCE [LARGE SCALE GENOMIC DNA]</scope>
    <source>
        <strain>ATCC 8503 / DSM 20701 / CIP 104284 / JCM 5825 / NCTC 11152</strain>
    </source>
</reference>
<sequence length="194" mass="21549">MSKMNPNEKKENASKNENVNNEEATNLQEEQSNAADEAAGSDNVSGEVEALQKKYNELNDSHLRLMAEFDNYRKRTMREKADLIKTGGEGALKNLLPIIDDFERALQNVRAAEDVEAVKEGVDLIFGKFMGYLSQQGVKPIEAIGKPFDTEEFEAIATIPAPEPDMKGKVLDCVQTGYTLFDKVIRHAKVVVGE</sequence>
<protein>
    <recommendedName>
        <fullName evidence="1">Protein GrpE</fullName>
    </recommendedName>
    <alternativeName>
        <fullName evidence="1">HSP-70 cofactor</fullName>
    </alternativeName>
</protein>